<name>DLDH_HALVD</name>
<dbReference type="EC" id="1.8.1.4"/>
<dbReference type="EMBL" id="L09733">
    <property type="protein sequence ID" value="AAA72340.1"/>
    <property type="molecule type" value="Genomic_DNA"/>
</dbReference>
<dbReference type="EMBL" id="CP001956">
    <property type="protein sequence ID" value="ADE04480.1"/>
    <property type="molecule type" value="Genomic_DNA"/>
</dbReference>
<dbReference type="PIR" id="A56824">
    <property type="entry name" value="A56824"/>
</dbReference>
<dbReference type="RefSeq" id="WP_004044825.1">
    <property type="nucleotide sequence ID" value="NC_013967.1"/>
</dbReference>
<dbReference type="SMR" id="Q04829"/>
<dbReference type="STRING" id="309800.HVO_2961"/>
<dbReference type="PaxDb" id="309800-C498_17965"/>
<dbReference type="EnsemblBacteria" id="ADE04480">
    <property type="protein sequence ID" value="ADE04480"/>
    <property type="gene ID" value="HVO_2961"/>
</dbReference>
<dbReference type="GeneID" id="8924221"/>
<dbReference type="KEGG" id="hvo:HVO_2961"/>
<dbReference type="eggNOG" id="arCOG01068">
    <property type="taxonomic scope" value="Archaea"/>
</dbReference>
<dbReference type="HOGENOM" id="CLU_016755_0_3_2"/>
<dbReference type="OrthoDB" id="27922at2157"/>
<dbReference type="BRENDA" id="1.8.1.4">
    <property type="organism ID" value="2561"/>
</dbReference>
<dbReference type="SABIO-RK" id="Q04829"/>
<dbReference type="Proteomes" id="UP000008243">
    <property type="component" value="Chromosome"/>
</dbReference>
<dbReference type="GO" id="GO:0005737">
    <property type="term" value="C:cytoplasm"/>
    <property type="evidence" value="ECO:0007669"/>
    <property type="project" value="UniProtKB-SubCell"/>
</dbReference>
<dbReference type="GO" id="GO:0004148">
    <property type="term" value="F:dihydrolipoyl dehydrogenase (NADH) activity"/>
    <property type="evidence" value="ECO:0007669"/>
    <property type="project" value="UniProtKB-EC"/>
</dbReference>
<dbReference type="GO" id="GO:0050660">
    <property type="term" value="F:flavin adenine dinucleotide binding"/>
    <property type="evidence" value="ECO:0007669"/>
    <property type="project" value="InterPro"/>
</dbReference>
<dbReference type="GO" id="GO:0006103">
    <property type="term" value="P:2-oxoglutarate metabolic process"/>
    <property type="evidence" value="ECO:0007669"/>
    <property type="project" value="TreeGrafter"/>
</dbReference>
<dbReference type="FunFam" id="3.30.390.30:FF:000001">
    <property type="entry name" value="Dihydrolipoyl dehydrogenase"/>
    <property type="match status" value="1"/>
</dbReference>
<dbReference type="Gene3D" id="3.30.390.30">
    <property type="match status" value="1"/>
</dbReference>
<dbReference type="Gene3D" id="3.50.50.60">
    <property type="entry name" value="FAD/NAD(P)-binding domain"/>
    <property type="match status" value="2"/>
</dbReference>
<dbReference type="InterPro" id="IPR050151">
    <property type="entry name" value="Class-I_Pyr_Nuc-Dis_Oxidored"/>
</dbReference>
<dbReference type="InterPro" id="IPR036188">
    <property type="entry name" value="FAD/NAD-bd_sf"/>
</dbReference>
<dbReference type="InterPro" id="IPR023753">
    <property type="entry name" value="FAD/NAD-binding_dom"/>
</dbReference>
<dbReference type="InterPro" id="IPR016156">
    <property type="entry name" value="FAD/NAD-linked_Rdtase_dimer_sf"/>
</dbReference>
<dbReference type="InterPro" id="IPR006258">
    <property type="entry name" value="Lipoamide_DH"/>
</dbReference>
<dbReference type="InterPro" id="IPR001100">
    <property type="entry name" value="Pyr_nuc-diS_OxRdtase"/>
</dbReference>
<dbReference type="InterPro" id="IPR004099">
    <property type="entry name" value="Pyr_nucl-diS_OxRdtase_dimer"/>
</dbReference>
<dbReference type="InterPro" id="IPR012999">
    <property type="entry name" value="Pyr_OxRdtase_I_AS"/>
</dbReference>
<dbReference type="NCBIfam" id="TIGR01350">
    <property type="entry name" value="lipoamide_DH"/>
    <property type="match status" value="1"/>
</dbReference>
<dbReference type="PANTHER" id="PTHR22912:SF160">
    <property type="entry name" value="DIHYDROLIPOYL DEHYDROGENASE"/>
    <property type="match status" value="1"/>
</dbReference>
<dbReference type="PANTHER" id="PTHR22912">
    <property type="entry name" value="DISULFIDE OXIDOREDUCTASE"/>
    <property type="match status" value="1"/>
</dbReference>
<dbReference type="Pfam" id="PF07992">
    <property type="entry name" value="Pyr_redox_2"/>
    <property type="match status" value="1"/>
</dbReference>
<dbReference type="Pfam" id="PF02852">
    <property type="entry name" value="Pyr_redox_dim"/>
    <property type="match status" value="1"/>
</dbReference>
<dbReference type="PIRSF" id="PIRSF000350">
    <property type="entry name" value="Mercury_reductase_MerA"/>
    <property type="match status" value="1"/>
</dbReference>
<dbReference type="PRINTS" id="PR00368">
    <property type="entry name" value="FADPNR"/>
</dbReference>
<dbReference type="PRINTS" id="PR00411">
    <property type="entry name" value="PNDRDTASEI"/>
</dbReference>
<dbReference type="SUPFAM" id="SSF51905">
    <property type="entry name" value="FAD/NAD(P)-binding domain"/>
    <property type="match status" value="1"/>
</dbReference>
<dbReference type="SUPFAM" id="SSF55424">
    <property type="entry name" value="FAD/NAD-linked reductases, dimerisation (C-terminal) domain"/>
    <property type="match status" value="1"/>
</dbReference>
<dbReference type="PROSITE" id="PS00076">
    <property type="entry name" value="PYRIDINE_REDOX_1"/>
    <property type="match status" value="1"/>
</dbReference>
<reference key="1">
    <citation type="journal article" date="1992" name="Biochem. Cell Biol.">
        <title>Dihydrolipoamide dehydrogenase from Haloferax volcanii: gene cloning, complete primary structure, and comparison to other dihydrolipoamide dehydrogenases.</title>
        <authorList>
            <person name="Vettakkorumakankav N.N."/>
            <person name="Stevenson K.J."/>
        </authorList>
    </citation>
    <scope>NUCLEOTIDE SEQUENCE [GENOMIC DNA]</scope>
    <scope>PROTEIN SEQUENCE OF 326-348</scope>
</reference>
<reference key="2">
    <citation type="journal article" date="2010" name="PLoS ONE">
        <title>The complete genome sequence of Haloferax volcanii DS2, a model archaeon.</title>
        <authorList>
            <person name="Hartman A.L."/>
            <person name="Norais C."/>
            <person name="Badger J.H."/>
            <person name="Delmas S."/>
            <person name="Haldenby S."/>
            <person name="Madupu R."/>
            <person name="Robinson J."/>
            <person name="Khouri H."/>
            <person name="Ren Q."/>
            <person name="Lowe T.M."/>
            <person name="Maupin-Furlow J."/>
            <person name="Pohlschroder M."/>
            <person name="Daniels C."/>
            <person name="Pfeiffer F."/>
            <person name="Allers T."/>
            <person name="Eisen J.A."/>
        </authorList>
    </citation>
    <scope>NUCLEOTIDE SEQUENCE [LARGE SCALE GENOMIC DNA]</scope>
    <source>
        <strain>ATCC 29605 / DSM 3757 / JCM 8879 / NBRC 14742 / NCIMB 2012 / VKM B-1768 / DS2</strain>
    </source>
</reference>
<reference key="3">
    <citation type="journal article" date="1992" name="Biochem. Cell Biol.">
        <title>Dihydrolipoamide dehydrogenase from the halophilic archaebacterium Haloferax volcanii: characterization and N-terminal sequence.</title>
        <authorList>
            <person name="Vettakkorumakankav N.N."/>
            <person name="Danson M.J."/>
            <person name="Hough D.W."/>
            <person name="Stevenson K.J."/>
            <person name="Davison M."/>
            <person name="Young J."/>
        </authorList>
    </citation>
    <scope>PROTEIN SEQUENCE OF 2-49</scope>
</reference>
<evidence type="ECO:0000250" key="1"/>
<evidence type="ECO:0000269" key="2">
    <source>
    </source>
</evidence>
<evidence type="ECO:0000305" key="3"/>
<proteinExistence type="evidence at protein level"/>
<sequence>MVVGDIATGTELLVIGAGPGGYVAAIRAAQNGIDTTLVEKDAYGGTCLNYGCIPSKALITGANLAHEAGNAEEMGIHADPVVDMSQLRDWKSGVVDQLTGGVEKLCKANGVNLVEGTARFKDENAVRIAHGGEGQGSETIEFEHCIIATGSRVIQIPGFDFGDEPVWSSRDALEADTVPERLVVVGGGYIGMELSTTFAKLGADVTVVEMLDDILPGYESDVARVVRKRAEELGIDMHLGEGASGWREEDDGIMVTTETEDGEENEYRADKVLVAVGRSPVTDTMDIENAGLEADDRGFLSVDDRRRTDVEHIYAVGDVVEDTPMLAHVASKEGIVAAEHVAGEPVAFDSQAVPAAVFTDPEIGTVGMTEADAEEAGFTPVVGQMPFRASGRALTTNHADGFVRVVADEESGFVLGAQIVGPEASELIAELAFAIEMGATLEDVASTIHTHPTLAEAVMEAAENALGQAIHTLNR</sequence>
<accession>Q04829</accession>
<accession>D4GY21</accession>
<feature type="initiator methionine" description="Removed" evidence="2">
    <location>
        <position position="1"/>
    </location>
</feature>
<feature type="chain" id="PRO_0000068058" description="Dihydrolipoyl dehydrogenase">
    <location>
        <begin position="2"/>
        <end position="475"/>
    </location>
</feature>
<feature type="active site" description="Proton acceptor" evidence="1">
    <location>
        <position position="451"/>
    </location>
</feature>
<feature type="binding site" evidence="1">
    <location>
        <begin position="39"/>
        <end position="47"/>
    </location>
    <ligand>
        <name>FAD</name>
        <dbReference type="ChEBI" id="CHEBI:57692"/>
    </ligand>
</feature>
<feature type="binding site" evidence="1">
    <location>
        <position position="56"/>
    </location>
    <ligand>
        <name>FAD</name>
        <dbReference type="ChEBI" id="CHEBI:57692"/>
    </ligand>
</feature>
<feature type="binding site" evidence="1">
    <location>
        <position position="118"/>
    </location>
    <ligand>
        <name>FAD</name>
        <dbReference type="ChEBI" id="CHEBI:57692"/>
    </ligand>
</feature>
<feature type="binding site" evidence="1">
    <location>
        <begin position="186"/>
        <end position="190"/>
    </location>
    <ligand>
        <name>NAD(+)</name>
        <dbReference type="ChEBI" id="CHEBI:57540"/>
    </ligand>
</feature>
<feature type="binding site" evidence="1">
    <location>
        <position position="209"/>
    </location>
    <ligand>
        <name>NAD(+)</name>
        <dbReference type="ChEBI" id="CHEBI:57540"/>
    </ligand>
</feature>
<feature type="binding site" evidence="1">
    <location>
        <begin position="275"/>
        <end position="278"/>
    </location>
    <ligand>
        <name>NAD(+)</name>
        <dbReference type="ChEBI" id="CHEBI:57540"/>
    </ligand>
</feature>
<feature type="binding site" evidence="1">
    <location>
        <position position="318"/>
    </location>
    <ligand>
        <name>FAD</name>
        <dbReference type="ChEBI" id="CHEBI:57692"/>
    </ligand>
</feature>
<feature type="binding site" evidence="1">
    <location>
        <position position="327"/>
    </location>
    <ligand>
        <name>FAD</name>
        <dbReference type="ChEBI" id="CHEBI:57692"/>
    </ligand>
</feature>
<feature type="disulfide bond" description="Redox-active" evidence="1">
    <location>
        <begin position="47"/>
        <end position="52"/>
    </location>
</feature>
<feature type="sequence conflict" description="In Ref. 1; AAA72340." evidence="3" ref="1">
    <original>S</original>
    <variation>T</variation>
    <location>
        <position position="244"/>
    </location>
</feature>
<protein>
    <recommendedName>
        <fullName>Dihydrolipoyl dehydrogenase</fullName>
        <ecNumber>1.8.1.4</ecNumber>
    </recommendedName>
    <alternativeName>
        <fullName>Dihydrolipoamide dehydrogenase</fullName>
    </alternativeName>
</protein>
<keyword id="KW-0963">Cytoplasm</keyword>
<keyword id="KW-0903">Direct protein sequencing</keyword>
<keyword id="KW-1015">Disulfide bond</keyword>
<keyword id="KW-0274">FAD</keyword>
<keyword id="KW-0285">Flavoprotein</keyword>
<keyword id="KW-0520">NAD</keyword>
<keyword id="KW-0560">Oxidoreductase</keyword>
<keyword id="KW-0676">Redox-active center</keyword>
<keyword id="KW-1185">Reference proteome</keyword>
<comment type="catalytic activity">
    <reaction>
        <text>N(6)-[(R)-dihydrolipoyl]-L-lysyl-[protein] + NAD(+) = N(6)-[(R)-lipoyl]-L-lysyl-[protein] + NADH + H(+)</text>
        <dbReference type="Rhea" id="RHEA:15045"/>
        <dbReference type="Rhea" id="RHEA-COMP:10474"/>
        <dbReference type="Rhea" id="RHEA-COMP:10475"/>
        <dbReference type="ChEBI" id="CHEBI:15378"/>
        <dbReference type="ChEBI" id="CHEBI:57540"/>
        <dbReference type="ChEBI" id="CHEBI:57945"/>
        <dbReference type="ChEBI" id="CHEBI:83099"/>
        <dbReference type="ChEBI" id="CHEBI:83100"/>
        <dbReference type="EC" id="1.8.1.4"/>
    </reaction>
</comment>
<comment type="cofactor">
    <cofactor evidence="1">
        <name>FAD</name>
        <dbReference type="ChEBI" id="CHEBI:57692"/>
    </cofactor>
    <text evidence="1">Binds 1 FAD per subunit.</text>
</comment>
<comment type="subunit">
    <text>Homodimer.</text>
</comment>
<comment type="subcellular location">
    <subcellularLocation>
        <location>Cytoplasm</location>
    </subcellularLocation>
</comment>
<comment type="miscellaneous">
    <text>The active site is a redox-active disulfide bond.</text>
</comment>
<comment type="similarity">
    <text evidence="3">Belongs to the class-I pyridine nucleotide-disulfide oxidoreductase family.</text>
</comment>
<gene>
    <name type="primary">lpdA</name>
    <name type="synonym">lpd</name>
    <name type="ordered locus">HVO_2961</name>
</gene>
<organism>
    <name type="scientific">Haloferax volcanii (strain ATCC 29605 / DSM 3757 / JCM 8879 / NBRC 14742 / NCIMB 2012 / VKM B-1768 / DS2)</name>
    <name type="common">Halobacterium volcanii</name>
    <dbReference type="NCBI Taxonomy" id="309800"/>
    <lineage>
        <taxon>Archaea</taxon>
        <taxon>Methanobacteriati</taxon>
        <taxon>Methanobacteriota</taxon>
        <taxon>Stenosarchaea group</taxon>
        <taxon>Halobacteria</taxon>
        <taxon>Halobacteriales</taxon>
        <taxon>Haloferacaceae</taxon>
        <taxon>Haloferax</taxon>
    </lineage>
</organism>